<gene>
    <name evidence="1" type="primary">GET1</name>
    <name type="ORF">PADG_04547</name>
</gene>
<reference key="1">
    <citation type="journal article" date="2011" name="PLoS Genet.">
        <title>Comparative genomic analysis of human fungal pathogens causing paracoccidioidomycosis.</title>
        <authorList>
            <person name="Desjardins C.A."/>
            <person name="Champion M.D."/>
            <person name="Holder J.W."/>
            <person name="Muszewska A."/>
            <person name="Goldberg J."/>
            <person name="Bailao A.M."/>
            <person name="Brigido M.M."/>
            <person name="Ferreira M.E."/>
            <person name="Garcia A.M."/>
            <person name="Grynberg M."/>
            <person name="Gujja S."/>
            <person name="Heiman D.I."/>
            <person name="Henn M.R."/>
            <person name="Kodira C.D."/>
            <person name="Leon-Narvaez H."/>
            <person name="Longo L.V.G."/>
            <person name="Ma L.-J."/>
            <person name="Malavazi I."/>
            <person name="Matsuo A.L."/>
            <person name="Morais F.V."/>
            <person name="Pereira M."/>
            <person name="Rodriguez-Brito S."/>
            <person name="Sakthikumar S."/>
            <person name="Salem-Izacc S.M."/>
            <person name="Sykes S.M."/>
            <person name="Teixeira M.M."/>
            <person name="Vallejo M.C."/>
            <person name="Walter M.E."/>
            <person name="Yandava C."/>
            <person name="Young S."/>
            <person name="Zeng Q."/>
            <person name="Zucker J."/>
            <person name="Felipe M.S."/>
            <person name="Goldman G.H."/>
            <person name="Haas B.J."/>
            <person name="McEwen J.G."/>
            <person name="Nino-Vega G."/>
            <person name="Puccia R."/>
            <person name="San-Blas G."/>
            <person name="Soares C.M."/>
            <person name="Birren B.W."/>
            <person name="Cuomo C.A."/>
        </authorList>
    </citation>
    <scope>NUCLEOTIDE SEQUENCE [LARGE SCALE GENOMIC DNA]</scope>
    <source>
        <strain>Pb18</strain>
    </source>
</reference>
<keyword id="KW-0175">Coiled coil</keyword>
<keyword id="KW-0256">Endoplasmic reticulum</keyword>
<keyword id="KW-0472">Membrane</keyword>
<keyword id="KW-1185">Reference proteome</keyword>
<keyword id="KW-0812">Transmembrane</keyword>
<keyword id="KW-1133">Transmembrane helix</keyword>
<keyword id="KW-0813">Transport</keyword>
<comment type="function">
    <text evidence="1">Required for the post-translational delivery of tail-anchored (TA) proteins to the endoplasmic reticulum. Acts as a membrane receptor for soluble GET3, which recognizes and selectively binds the transmembrane domain of TA proteins in the cytosol.</text>
</comment>
<comment type="subunit">
    <text evidence="1">Interacts with GET3.</text>
</comment>
<comment type="subcellular location">
    <subcellularLocation>
        <location evidence="1">Endoplasmic reticulum membrane</location>
        <topology evidence="1">Multi-pass membrane protein</topology>
    </subcellularLocation>
</comment>
<comment type="similarity">
    <text evidence="1">Belongs to the WRB/GET1 family.</text>
</comment>
<proteinExistence type="inferred from homology"/>
<accession>C1GC25</accession>
<organism>
    <name type="scientific">Paracoccidioides brasiliensis (strain Pb18)</name>
    <dbReference type="NCBI Taxonomy" id="502780"/>
    <lineage>
        <taxon>Eukaryota</taxon>
        <taxon>Fungi</taxon>
        <taxon>Dikarya</taxon>
        <taxon>Ascomycota</taxon>
        <taxon>Pezizomycotina</taxon>
        <taxon>Eurotiomycetes</taxon>
        <taxon>Eurotiomycetidae</taxon>
        <taxon>Onygenales</taxon>
        <taxon>Ajellomycetaceae</taxon>
        <taxon>Paracoccidioides</taxon>
    </lineage>
</organism>
<name>GET1_PARBD</name>
<feature type="chain" id="PRO_0000388606" description="Protein GET1">
    <location>
        <begin position="1"/>
        <end position="207"/>
    </location>
</feature>
<feature type="topological domain" description="Lumenal" evidence="1">
    <location>
        <begin position="1"/>
        <end position="4"/>
    </location>
</feature>
<feature type="transmembrane region" description="Helical" evidence="1">
    <location>
        <begin position="5"/>
        <end position="24"/>
    </location>
</feature>
<feature type="topological domain" description="Cytoplasmic" evidence="1">
    <location>
        <begin position="25"/>
        <end position="110"/>
    </location>
</feature>
<feature type="transmembrane region" description="Helical" evidence="1">
    <location>
        <begin position="111"/>
        <end position="131"/>
    </location>
</feature>
<feature type="topological domain" description="Lumenal" evidence="1">
    <location>
        <begin position="132"/>
        <end position="155"/>
    </location>
</feature>
<feature type="transmembrane region" description="Helical" evidence="1">
    <location>
        <begin position="156"/>
        <end position="172"/>
    </location>
</feature>
<feature type="topological domain" description="Cytoplasmic" evidence="1">
    <location>
        <begin position="173"/>
        <end position="207"/>
    </location>
</feature>
<feature type="coiled-coil region" evidence="1">
    <location>
        <begin position="44"/>
        <end position="97"/>
    </location>
</feature>
<evidence type="ECO:0000255" key="1">
    <source>
        <dbReference type="HAMAP-Rule" id="MF_03113"/>
    </source>
</evidence>
<sequence length="207" mass="23471">MPSLLISVLFLHIAIYIINTIAASTIDSLLWLIYMKLPTSASCIAREQHQMKLEVVQLKREMNATSSQDEFAKWAKLRRRHDKALEEYEVKNKQFSRFKSFFDVAVKALRWAGTSGLIVFLQFWFSKTPIFTLPPSWIPWQVEWVLSFPRAPMGTVSIQVWGGACAVVVALIGEAIGATVRYLYASKDSMEAIKVGAGAVEKEKKRQ</sequence>
<dbReference type="EMBL" id="KN275961">
    <property type="protein sequence ID" value="EEH48469.1"/>
    <property type="molecule type" value="Genomic_DNA"/>
</dbReference>
<dbReference type="RefSeq" id="XP_010760294.1">
    <property type="nucleotide sequence ID" value="XM_010761992.1"/>
</dbReference>
<dbReference type="SMR" id="C1GC25"/>
<dbReference type="STRING" id="502780.C1GC25"/>
<dbReference type="GeneID" id="22583647"/>
<dbReference type="KEGG" id="pbn:PADG_04547"/>
<dbReference type="VEuPathDB" id="FungiDB:PADG_04547"/>
<dbReference type="eggNOG" id="KOG4253">
    <property type="taxonomic scope" value="Eukaryota"/>
</dbReference>
<dbReference type="HOGENOM" id="CLU_089418_1_0_1"/>
<dbReference type="InParanoid" id="C1GC25"/>
<dbReference type="OMA" id="AEWIISF"/>
<dbReference type="OrthoDB" id="9924at33183"/>
<dbReference type="Proteomes" id="UP000001628">
    <property type="component" value="Unassembled WGS sequence"/>
</dbReference>
<dbReference type="GO" id="GO:0005789">
    <property type="term" value="C:endoplasmic reticulum membrane"/>
    <property type="evidence" value="ECO:0007669"/>
    <property type="project" value="UniProtKB-SubCell"/>
</dbReference>
<dbReference type="GO" id="GO:0043529">
    <property type="term" value="C:GET complex"/>
    <property type="evidence" value="ECO:0007669"/>
    <property type="project" value="InterPro"/>
</dbReference>
<dbReference type="GO" id="GO:0043495">
    <property type="term" value="F:protein-membrane adaptor activity"/>
    <property type="evidence" value="ECO:0007669"/>
    <property type="project" value="TreeGrafter"/>
</dbReference>
<dbReference type="GO" id="GO:0071816">
    <property type="term" value="P:tail-anchored membrane protein insertion into ER membrane"/>
    <property type="evidence" value="ECO:0007669"/>
    <property type="project" value="InterPro"/>
</dbReference>
<dbReference type="FunFam" id="1.10.287.660:FF:000006">
    <property type="entry name" value="Protein GET1"/>
    <property type="match status" value="1"/>
</dbReference>
<dbReference type="Gene3D" id="1.10.287.660">
    <property type="entry name" value="Helix hairpin bin"/>
    <property type="match status" value="1"/>
</dbReference>
<dbReference type="HAMAP" id="MF_03113">
    <property type="entry name" value="Get1"/>
    <property type="match status" value="1"/>
</dbReference>
<dbReference type="InterPro" id="IPR028945">
    <property type="entry name" value="Get1"/>
</dbReference>
<dbReference type="InterPro" id="IPR027538">
    <property type="entry name" value="Get1_fungi"/>
</dbReference>
<dbReference type="InterPro" id="IPR029012">
    <property type="entry name" value="Helix_hairpin_bin_sf"/>
</dbReference>
<dbReference type="PANTHER" id="PTHR42650:SF1">
    <property type="entry name" value="GUIDED ENTRY OF TAIL-ANCHORED PROTEINS FACTOR 1"/>
    <property type="match status" value="1"/>
</dbReference>
<dbReference type="PANTHER" id="PTHR42650">
    <property type="entry name" value="TAIL-ANCHORED PROTEIN INSERTION RECEPTOR WRB"/>
    <property type="match status" value="1"/>
</dbReference>
<dbReference type="Pfam" id="PF04420">
    <property type="entry name" value="CHD5"/>
    <property type="match status" value="1"/>
</dbReference>
<protein>
    <recommendedName>
        <fullName evidence="1">Protein GET1</fullName>
    </recommendedName>
    <alternativeName>
        <fullName evidence="1">Guided entry of tail-anchored proteins 1</fullName>
    </alternativeName>
</protein>